<dbReference type="EC" id="6.5.1.1" evidence="1"/>
<dbReference type="EMBL" id="CP000300">
    <property type="protein sequence ID" value="ABE52018.1"/>
    <property type="molecule type" value="Genomic_DNA"/>
</dbReference>
<dbReference type="RefSeq" id="WP_011499166.1">
    <property type="nucleotide sequence ID" value="NC_007955.1"/>
</dbReference>
<dbReference type="SMR" id="Q12X08"/>
<dbReference type="STRING" id="259564.Mbur_1088"/>
<dbReference type="GeneID" id="3998025"/>
<dbReference type="KEGG" id="mbu:Mbur_1088"/>
<dbReference type="HOGENOM" id="CLU_005138_6_0_2"/>
<dbReference type="OrthoDB" id="31274at2157"/>
<dbReference type="Proteomes" id="UP000001979">
    <property type="component" value="Chromosome"/>
</dbReference>
<dbReference type="GO" id="GO:0005524">
    <property type="term" value="F:ATP binding"/>
    <property type="evidence" value="ECO:0007669"/>
    <property type="project" value="UniProtKB-UniRule"/>
</dbReference>
<dbReference type="GO" id="GO:0003677">
    <property type="term" value="F:DNA binding"/>
    <property type="evidence" value="ECO:0007669"/>
    <property type="project" value="InterPro"/>
</dbReference>
<dbReference type="GO" id="GO:0003910">
    <property type="term" value="F:DNA ligase (ATP) activity"/>
    <property type="evidence" value="ECO:0007669"/>
    <property type="project" value="UniProtKB-UniRule"/>
</dbReference>
<dbReference type="GO" id="GO:0046872">
    <property type="term" value="F:metal ion binding"/>
    <property type="evidence" value="ECO:0007669"/>
    <property type="project" value="UniProtKB-KW"/>
</dbReference>
<dbReference type="GO" id="GO:0051301">
    <property type="term" value="P:cell division"/>
    <property type="evidence" value="ECO:0007669"/>
    <property type="project" value="UniProtKB-KW"/>
</dbReference>
<dbReference type="GO" id="GO:0071897">
    <property type="term" value="P:DNA biosynthetic process"/>
    <property type="evidence" value="ECO:0007669"/>
    <property type="project" value="InterPro"/>
</dbReference>
<dbReference type="GO" id="GO:0006310">
    <property type="term" value="P:DNA recombination"/>
    <property type="evidence" value="ECO:0007669"/>
    <property type="project" value="UniProtKB-UniRule"/>
</dbReference>
<dbReference type="GO" id="GO:0006281">
    <property type="term" value="P:DNA repair"/>
    <property type="evidence" value="ECO:0007669"/>
    <property type="project" value="UniProtKB-UniRule"/>
</dbReference>
<dbReference type="GO" id="GO:0006273">
    <property type="term" value="P:lagging strand elongation"/>
    <property type="evidence" value="ECO:0007669"/>
    <property type="project" value="TreeGrafter"/>
</dbReference>
<dbReference type="CDD" id="cd07901">
    <property type="entry name" value="Adenylation_DNA_ligase_Arch_LigB"/>
    <property type="match status" value="1"/>
</dbReference>
<dbReference type="CDD" id="cd07972">
    <property type="entry name" value="OBF_DNA_ligase_Arch_LigB"/>
    <property type="match status" value="1"/>
</dbReference>
<dbReference type="FunFam" id="1.10.3260.10:FF:000007">
    <property type="entry name" value="DNA ligase"/>
    <property type="match status" value="1"/>
</dbReference>
<dbReference type="FunFam" id="2.40.50.140:FF:000163">
    <property type="entry name" value="Probable DNA ligase"/>
    <property type="match status" value="1"/>
</dbReference>
<dbReference type="FunFam" id="3.30.470.30:FF:000012">
    <property type="entry name" value="Probable DNA ligase"/>
    <property type="match status" value="1"/>
</dbReference>
<dbReference type="Gene3D" id="1.10.3260.10">
    <property type="entry name" value="DNA ligase, ATP-dependent, N-terminal domain"/>
    <property type="match status" value="1"/>
</dbReference>
<dbReference type="Gene3D" id="3.30.470.30">
    <property type="entry name" value="DNA ligase/mRNA capping enzyme"/>
    <property type="match status" value="1"/>
</dbReference>
<dbReference type="Gene3D" id="2.40.50.140">
    <property type="entry name" value="Nucleic acid-binding proteins"/>
    <property type="match status" value="1"/>
</dbReference>
<dbReference type="HAMAP" id="MF_00407">
    <property type="entry name" value="DNA_ligase"/>
    <property type="match status" value="1"/>
</dbReference>
<dbReference type="InterPro" id="IPR050191">
    <property type="entry name" value="ATP-dep_DNA_ligase"/>
</dbReference>
<dbReference type="InterPro" id="IPR022865">
    <property type="entry name" value="DNA_ligae_ATP-dep_bac/arc"/>
</dbReference>
<dbReference type="InterPro" id="IPR000977">
    <property type="entry name" value="DNA_ligase_ATP-dep"/>
</dbReference>
<dbReference type="InterPro" id="IPR012309">
    <property type="entry name" value="DNA_ligase_ATP-dep_C"/>
</dbReference>
<dbReference type="InterPro" id="IPR012310">
    <property type="entry name" value="DNA_ligase_ATP-dep_cent"/>
</dbReference>
<dbReference type="InterPro" id="IPR016059">
    <property type="entry name" value="DNA_ligase_ATP-dep_CS"/>
</dbReference>
<dbReference type="InterPro" id="IPR012308">
    <property type="entry name" value="DNA_ligase_ATP-dep_N"/>
</dbReference>
<dbReference type="InterPro" id="IPR036599">
    <property type="entry name" value="DNA_ligase_N_sf"/>
</dbReference>
<dbReference type="InterPro" id="IPR012340">
    <property type="entry name" value="NA-bd_OB-fold"/>
</dbReference>
<dbReference type="NCBIfam" id="TIGR00574">
    <property type="entry name" value="dnl1"/>
    <property type="match status" value="1"/>
</dbReference>
<dbReference type="PANTHER" id="PTHR45674:SF7">
    <property type="entry name" value="DNA LIGASE"/>
    <property type="match status" value="1"/>
</dbReference>
<dbReference type="PANTHER" id="PTHR45674">
    <property type="entry name" value="DNA LIGASE 1/3 FAMILY MEMBER"/>
    <property type="match status" value="1"/>
</dbReference>
<dbReference type="Pfam" id="PF04679">
    <property type="entry name" value="DNA_ligase_A_C"/>
    <property type="match status" value="1"/>
</dbReference>
<dbReference type="Pfam" id="PF01068">
    <property type="entry name" value="DNA_ligase_A_M"/>
    <property type="match status" value="1"/>
</dbReference>
<dbReference type="Pfam" id="PF04675">
    <property type="entry name" value="DNA_ligase_A_N"/>
    <property type="match status" value="1"/>
</dbReference>
<dbReference type="SUPFAM" id="SSF117018">
    <property type="entry name" value="ATP-dependent DNA ligase DNA-binding domain"/>
    <property type="match status" value="1"/>
</dbReference>
<dbReference type="SUPFAM" id="SSF56091">
    <property type="entry name" value="DNA ligase/mRNA capping enzyme, catalytic domain"/>
    <property type="match status" value="1"/>
</dbReference>
<dbReference type="SUPFAM" id="SSF50249">
    <property type="entry name" value="Nucleic acid-binding proteins"/>
    <property type="match status" value="1"/>
</dbReference>
<dbReference type="PROSITE" id="PS00697">
    <property type="entry name" value="DNA_LIGASE_A1"/>
    <property type="match status" value="1"/>
</dbReference>
<dbReference type="PROSITE" id="PS50160">
    <property type="entry name" value="DNA_LIGASE_A3"/>
    <property type="match status" value="1"/>
</dbReference>
<accession>Q12X08</accession>
<organism>
    <name type="scientific">Methanococcoides burtonii (strain DSM 6242 / NBRC 107633 / OCM 468 / ACE-M)</name>
    <dbReference type="NCBI Taxonomy" id="259564"/>
    <lineage>
        <taxon>Archaea</taxon>
        <taxon>Methanobacteriati</taxon>
        <taxon>Methanobacteriota</taxon>
        <taxon>Stenosarchaea group</taxon>
        <taxon>Methanomicrobia</taxon>
        <taxon>Methanosarcinales</taxon>
        <taxon>Methanosarcinaceae</taxon>
        <taxon>Methanococcoides</taxon>
    </lineage>
</organism>
<comment type="function">
    <text evidence="1">DNA ligase that seals nicks in double-stranded DNA during DNA replication, DNA recombination and DNA repair.</text>
</comment>
<comment type="catalytic activity">
    <reaction evidence="1">
        <text>ATP + (deoxyribonucleotide)n-3'-hydroxyl + 5'-phospho-(deoxyribonucleotide)m = (deoxyribonucleotide)n+m + AMP + diphosphate.</text>
        <dbReference type="EC" id="6.5.1.1"/>
    </reaction>
</comment>
<comment type="cofactor">
    <cofactor evidence="1">
        <name>Mg(2+)</name>
        <dbReference type="ChEBI" id="CHEBI:18420"/>
    </cofactor>
</comment>
<comment type="similarity">
    <text evidence="1">Belongs to the ATP-dependent DNA ligase family.</text>
</comment>
<protein>
    <recommendedName>
        <fullName evidence="1">DNA ligase</fullName>
        <ecNumber evidence="1">6.5.1.1</ecNumber>
    </recommendedName>
    <alternativeName>
        <fullName evidence="1">Polydeoxyribonucleotide synthase [ATP]</fullName>
    </alternativeName>
</protein>
<keyword id="KW-0067">ATP-binding</keyword>
<keyword id="KW-0131">Cell cycle</keyword>
<keyword id="KW-0132">Cell division</keyword>
<keyword id="KW-0227">DNA damage</keyword>
<keyword id="KW-0233">DNA recombination</keyword>
<keyword id="KW-0234">DNA repair</keyword>
<keyword id="KW-0235">DNA replication</keyword>
<keyword id="KW-0436">Ligase</keyword>
<keyword id="KW-0460">Magnesium</keyword>
<keyword id="KW-0479">Metal-binding</keyword>
<keyword id="KW-0547">Nucleotide-binding</keyword>
<proteinExistence type="inferred from homology"/>
<reference key="1">
    <citation type="journal article" date="2009" name="ISME J.">
        <title>The genome sequence of the psychrophilic archaeon, Methanococcoides burtonii: the role of genome evolution in cold adaptation.</title>
        <authorList>
            <person name="Allen M.A."/>
            <person name="Lauro F.M."/>
            <person name="Williams T.J."/>
            <person name="Burg D."/>
            <person name="Siddiqui K.S."/>
            <person name="De Francisci D."/>
            <person name="Chong K.W."/>
            <person name="Pilak O."/>
            <person name="Chew H.H."/>
            <person name="De Maere M.Z."/>
            <person name="Ting L."/>
            <person name="Katrib M."/>
            <person name="Ng C."/>
            <person name="Sowers K.R."/>
            <person name="Galperin M.Y."/>
            <person name="Anderson I.J."/>
            <person name="Ivanova N."/>
            <person name="Dalin E."/>
            <person name="Martinez M."/>
            <person name="Lapidus A."/>
            <person name="Hauser L."/>
            <person name="Land M."/>
            <person name="Thomas T."/>
            <person name="Cavicchioli R."/>
        </authorList>
    </citation>
    <scope>NUCLEOTIDE SEQUENCE [LARGE SCALE GENOMIC DNA]</scope>
    <source>
        <strain>DSM 6242 / NBRC 107633 / OCM 468 / ACE-M</strain>
    </source>
</reference>
<gene>
    <name evidence="1" type="primary">lig</name>
    <name type="ordered locus">Mbur_1088</name>
</gene>
<feature type="chain" id="PRO_1000049869" description="DNA ligase">
    <location>
        <begin position="1"/>
        <end position="567"/>
    </location>
</feature>
<feature type="active site" description="N6-AMP-lysine intermediate" evidence="1">
    <location>
        <position position="262"/>
    </location>
</feature>
<feature type="binding site" evidence="1">
    <location>
        <position position="260"/>
    </location>
    <ligand>
        <name>ATP</name>
        <dbReference type="ChEBI" id="CHEBI:30616"/>
    </ligand>
</feature>
<feature type="binding site" evidence="1">
    <location>
        <position position="267"/>
    </location>
    <ligand>
        <name>ATP</name>
        <dbReference type="ChEBI" id="CHEBI:30616"/>
    </ligand>
</feature>
<feature type="binding site" evidence="1">
    <location>
        <position position="282"/>
    </location>
    <ligand>
        <name>ATP</name>
        <dbReference type="ChEBI" id="CHEBI:30616"/>
    </ligand>
</feature>
<feature type="binding site" evidence="1">
    <location>
        <position position="312"/>
    </location>
    <ligand>
        <name>ATP</name>
        <dbReference type="ChEBI" id="CHEBI:30616"/>
    </ligand>
</feature>
<feature type="binding site" evidence="1">
    <location>
        <position position="352"/>
    </location>
    <ligand>
        <name>ATP</name>
        <dbReference type="ChEBI" id="CHEBI:30616"/>
    </ligand>
</feature>
<feature type="binding site" evidence="1">
    <location>
        <position position="427"/>
    </location>
    <ligand>
        <name>ATP</name>
        <dbReference type="ChEBI" id="CHEBI:30616"/>
    </ligand>
</feature>
<feature type="binding site" evidence="1">
    <location>
        <position position="433"/>
    </location>
    <ligand>
        <name>ATP</name>
        <dbReference type="ChEBI" id="CHEBI:30616"/>
    </ligand>
</feature>
<name>DNLI_METBU</name>
<evidence type="ECO:0000255" key="1">
    <source>
        <dbReference type="HAMAP-Rule" id="MF_00407"/>
    </source>
</evidence>
<sequence length="567" mass="62743">MTDFKEFADVCKQIEHISSSLEMTDVVSDMLKSISTEELPVVTHFVMGDVFPAWSVEQLGVGTSLLYSALSESSGLSLKEIEDLVRSTGDIGETAVAALGKKKKNKKKNQASLSFFSEDAASVSISIMDVFERFLDISRYSGAGSQSSKMRNLQFLFNSSSSEEARYLARLTIEDLRIGVGEGIVRDAISKAFDVPAGDIERGFMLTNDLGLVAVAAKEGGIEEISKLRMELDRPIKMMLAQVTPSIEAAIKDLGMLAVEWKFDGARVQIHKKGDSINIFSRRLENVTLSLPDIVEAVKLHVKADSAILEGEAVAVDENGAPRAFQDILKRFRRKYDVETMVREIPLTLNLFDILYLNGDVLMDQSLLRRREQLVACVENCDSIKVDEQVLTDDVNVVNDIYAAALNGGHEGVMLKNPEASYSPGKRGKNWLKKKPIMETLDLVVIAAEWGYGKRANLIGSYALACFDPEDGKFLPIGKVATGFSDEQLAELTEVFSELIIGESGREIELKPDVVFEIAFEEIQKSTNYGSGYALRFPRLVNVREDKSPEEAETIDRIESIYLSQRG</sequence>